<accession>O65355</accession>
<accession>Q8VYT0</accession>
<accession>Q9ZV86</accession>
<reference key="1">
    <citation type="journal article" date="2000" name="Nature">
        <title>Sequence and analysis of chromosome 1 of the plant Arabidopsis thaliana.</title>
        <authorList>
            <person name="Theologis A."/>
            <person name="Ecker J.R."/>
            <person name="Palm C.J."/>
            <person name="Federspiel N.A."/>
            <person name="Kaul S."/>
            <person name="White O."/>
            <person name="Alonso J."/>
            <person name="Altafi H."/>
            <person name="Araujo R."/>
            <person name="Bowman C.L."/>
            <person name="Brooks S.Y."/>
            <person name="Buehler E."/>
            <person name="Chan A."/>
            <person name="Chao Q."/>
            <person name="Chen H."/>
            <person name="Cheuk R.F."/>
            <person name="Chin C.W."/>
            <person name="Chung M.K."/>
            <person name="Conn L."/>
            <person name="Conway A.B."/>
            <person name="Conway A.R."/>
            <person name="Creasy T.H."/>
            <person name="Dewar K."/>
            <person name="Dunn P."/>
            <person name="Etgu P."/>
            <person name="Feldblyum T.V."/>
            <person name="Feng J.-D."/>
            <person name="Fong B."/>
            <person name="Fujii C.Y."/>
            <person name="Gill J.E."/>
            <person name="Goldsmith A.D."/>
            <person name="Haas B."/>
            <person name="Hansen N.F."/>
            <person name="Hughes B."/>
            <person name="Huizar L."/>
            <person name="Hunter J.L."/>
            <person name="Jenkins J."/>
            <person name="Johnson-Hopson C."/>
            <person name="Khan S."/>
            <person name="Khaykin E."/>
            <person name="Kim C.J."/>
            <person name="Koo H.L."/>
            <person name="Kremenetskaia I."/>
            <person name="Kurtz D.B."/>
            <person name="Kwan A."/>
            <person name="Lam B."/>
            <person name="Langin-Hooper S."/>
            <person name="Lee A."/>
            <person name="Lee J.M."/>
            <person name="Lenz C.A."/>
            <person name="Li J.H."/>
            <person name="Li Y.-P."/>
            <person name="Lin X."/>
            <person name="Liu S.X."/>
            <person name="Liu Z.A."/>
            <person name="Luros J.S."/>
            <person name="Maiti R."/>
            <person name="Marziali A."/>
            <person name="Militscher J."/>
            <person name="Miranda M."/>
            <person name="Nguyen M."/>
            <person name="Nierman W.C."/>
            <person name="Osborne B.I."/>
            <person name="Pai G."/>
            <person name="Peterson J."/>
            <person name="Pham P.K."/>
            <person name="Rizzo M."/>
            <person name="Rooney T."/>
            <person name="Rowley D."/>
            <person name="Sakano H."/>
            <person name="Salzberg S.L."/>
            <person name="Schwartz J.R."/>
            <person name="Shinn P."/>
            <person name="Southwick A.M."/>
            <person name="Sun H."/>
            <person name="Tallon L.J."/>
            <person name="Tambunga G."/>
            <person name="Toriumi M.J."/>
            <person name="Town C.D."/>
            <person name="Utterback T."/>
            <person name="Van Aken S."/>
            <person name="Vaysberg M."/>
            <person name="Vysotskaia V.S."/>
            <person name="Walker M."/>
            <person name="Wu D."/>
            <person name="Yu G."/>
            <person name="Fraser C.M."/>
            <person name="Venter J.C."/>
            <person name="Davis R.W."/>
        </authorList>
    </citation>
    <scope>NUCLEOTIDE SEQUENCE [LARGE SCALE GENOMIC DNA]</scope>
    <source>
        <strain>cv. Columbia</strain>
    </source>
</reference>
<reference key="2">
    <citation type="journal article" date="2017" name="Plant J.">
        <title>Araport11: a complete reannotation of the Arabidopsis thaliana reference genome.</title>
        <authorList>
            <person name="Cheng C.Y."/>
            <person name="Krishnakumar V."/>
            <person name="Chan A.P."/>
            <person name="Thibaud-Nissen F."/>
            <person name="Schobel S."/>
            <person name="Town C.D."/>
        </authorList>
    </citation>
    <scope>GENOME REANNOTATION</scope>
    <source>
        <strain>cv. Columbia</strain>
    </source>
</reference>
<reference key="3">
    <citation type="journal article" date="2003" name="Science">
        <title>Empirical analysis of transcriptional activity in the Arabidopsis genome.</title>
        <authorList>
            <person name="Yamada K."/>
            <person name="Lim J."/>
            <person name="Dale J.M."/>
            <person name="Chen H."/>
            <person name="Shinn P."/>
            <person name="Palm C.J."/>
            <person name="Southwick A.M."/>
            <person name="Wu H.C."/>
            <person name="Kim C.J."/>
            <person name="Nguyen M."/>
            <person name="Pham P.K."/>
            <person name="Cheuk R.F."/>
            <person name="Karlin-Newmann G."/>
            <person name="Liu S.X."/>
            <person name="Lam B."/>
            <person name="Sakano H."/>
            <person name="Wu T."/>
            <person name="Yu G."/>
            <person name="Miranda M."/>
            <person name="Quach H.L."/>
            <person name="Tripp M."/>
            <person name="Chang C.H."/>
            <person name="Lee J.M."/>
            <person name="Toriumi M.J."/>
            <person name="Chan M.M."/>
            <person name="Tang C.C."/>
            <person name="Onodera C.S."/>
            <person name="Deng J.M."/>
            <person name="Akiyama K."/>
            <person name="Ansari Y."/>
            <person name="Arakawa T."/>
            <person name="Banh J."/>
            <person name="Banno F."/>
            <person name="Bowser L."/>
            <person name="Brooks S.Y."/>
            <person name="Carninci P."/>
            <person name="Chao Q."/>
            <person name="Choy N."/>
            <person name="Enju A."/>
            <person name="Goldsmith A.D."/>
            <person name="Gurjal M."/>
            <person name="Hansen N.F."/>
            <person name="Hayashizaki Y."/>
            <person name="Johnson-Hopson C."/>
            <person name="Hsuan V.W."/>
            <person name="Iida K."/>
            <person name="Karnes M."/>
            <person name="Khan S."/>
            <person name="Koesema E."/>
            <person name="Ishida J."/>
            <person name="Jiang P.X."/>
            <person name="Jones T."/>
            <person name="Kawai J."/>
            <person name="Kamiya A."/>
            <person name="Meyers C."/>
            <person name="Nakajima M."/>
            <person name="Narusaka M."/>
            <person name="Seki M."/>
            <person name="Sakurai T."/>
            <person name="Satou M."/>
            <person name="Tamse R."/>
            <person name="Vaysberg M."/>
            <person name="Wallender E.K."/>
            <person name="Wong C."/>
            <person name="Yamamura Y."/>
            <person name="Yuan S."/>
            <person name="Shinozaki K."/>
            <person name="Davis R.W."/>
            <person name="Theologis A."/>
            <person name="Ecker J.R."/>
        </authorList>
    </citation>
    <scope>NUCLEOTIDE SEQUENCE [LARGE SCALE MRNA]</scope>
    <source>
        <strain>cv. Columbia</strain>
    </source>
</reference>
<reference key="4">
    <citation type="online journal article" date="1998" name="Plant Gene Register">
        <title>Cloning of a gamma-glutamyl hydrolase cDNA from Arabidopsis.</title>
        <authorList>
            <person name="Rickle S.A."/>
            <person name="Xu H."/>
            <person name="Liu C.Y."/>
            <person name="Morris P.F."/>
            <person name="Graham J.S."/>
        </authorList>
        <locator>PGR98-146</locator>
    </citation>
    <scope>NUCLEOTIDE SEQUENCE [MRNA] OF 13-347</scope>
    <scope>CHARACTERIZATION</scope>
    <source>
        <strain>cv. Columbia</strain>
    </source>
</reference>
<reference key="5">
    <citation type="journal article" date="2010" name="Plant J.">
        <title>A central role for gamma-glutamyl hydrolases in plant folate homeostasis.</title>
        <authorList>
            <person name="Akhtar T.A."/>
            <person name="Orsomando G."/>
            <person name="Mehrshahi P."/>
            <person name="Lara-Nunez A."/>
            <person name="Bennett M.J."/>
            <person name="Gregory J.F. III"/>
            <person name="Hanson A.D."/>
        </authorList>
    </citation>
    <scope>FUNCTION</scope>
    <scope>SUBCELLULAR LOCATION</scope>
    <scope>TISSUE SPECIFICITY</scope>
    <scope>DISRUPTION PHENOTYPE</scope>
</reference>
<organism>
    <name type="scientific">Arabidopsis thaliana</name>
    <name type="common">Mouse-ear cress</name>
    <dbReference type="NCBI Taxonomy" id="3702"/>
    <lineage>
        <taxon>Eukaryota</taxon>
        <taxon>Viridiplantae</taxon>
        <taxon>Streptophyta</taxon>
        <taxon>Embryophyta</taxon>
        <taxon>Tracheophyta</taxon>
        <taxon>Spermatophyta</taxon>
        <taxon>Magnoliopsida</taxon>
        <taxon>eudicotyledons</taxon>
        <taxon>Gunneridae</taxon>
        <taxon>Pentapetalae</taxon>
        <taxon>rosids</taxon>
        <taxon>malvids</taxon>
        <taxon>Brassicales</taxon>
        <taxon>Brassicaceae</taxon>
        <taxon>Camelineae</taxon>
        <taxon>Arabidopsis</taxon>
    </lineage>
</organism>
<sequence>MWSYVWLPLVALSLFKDSIIMAKAATILLPSQTGFDISRSPVCSAPDPNLNYRPVIGILSHPGDGASGRLSNATDASSIAASYVKLAESGGARVIPLIFNEPEEILFQKLELVNGVILTGGWAKEGLYFEIVKKIFNKVLERNDAGEHFPIYAICLGFELLTMIISQNRDIFEKMDARNSASSLQFVENVNIQGTIFQRFPPELLKKLGTDCLVMQNHRFGISPQSFEGNIALSNFFKIVTTCVDDNGKVYVSTVQSTKYPVTGFQWHPEKNAFEWGSSKIPHSEDAIQVTQHAANHLVSEARKSLNRPESKKVLSNLIYNYKPTYCGYAGIGYDEVYIFTQQRSLL</sequence>
<name>GGH2_ARATH</name>
<protein>
    <recommendedName>
        <fullName>Gamma-glutamyl hydrolase 2</fullName>
        <shortName>AtGGH2</shortName>
        <ecNumber>3.4.19.9</ecNumber>
    </recommendedName>
    <alternativeName>
        <fullName>Conjugase</fullName>
    </alternativeName>
    <alternativeName>
        <fullName>GH</fullName>
    </alternativeName>
    <alternativeName>
        <fullName>Gamma-Glu-X carboxypeptidase</fullName>
    </alternativeName>
</protein>
<keyword id="KW-0025">Alternative splicing</keyword>
<keyword id="KW-0134">Cell wall</keyword>
<keyword id="KW-0378">Hydrolase</keyword>
<keyword id="KW-1185">Reference proteome</keyword>
<keyword id="KW-0964">Secreted</keyword>
<keyword id="KW-0732">Signal</keyword>
<keyword id="KW-0926">Vacuole</keyword>
<comment type="function">
    <text evidence="4">Cleaves the polyglutamate sidechains of folate polyglutamates in the vacuole. Is important for polyglutamyl tail length determination before vacuolar exit. Plays a role on folate stability and intracellular folate content. Has endopeptidase activity against 4-amino-10-methylpteroyl penta-, tetra-, tri- and di-gamma-L-glutamate substrates and is responsible for the production of folic acid, also called pteroylglutamic acid (PteGlu) from teroylpolyglutamates.</text>
</comment>
<comment type="catalytic activity">
    <reaction>
        <text>(6S)-5,6,7,8-tetrahydrofolyl-(gamma-L-Glu)(n) + (n-1) H2O = (6S)-5,6,7,8-tetrahydrofolate + (n-1) L-glutamate</text>
        <dbReference type="Rhea" id="RHEA:56784"/>
        <dbReference type="Rhea" id="RHEA-COMP:14738"/>
        <dbReference type="ChEBI" id="CHEBI:15377"/>
        <dbReference type="ChEBI" id="CHEBI:29985"/>
        <dbReference type="ChEBI" id="CHEBI:57453"/>
        <dbReference type="ChEBI" id="CHEBI:141005"/>
        <dbReference type="EC" id="3.4.19.9"/>
    </reaction>
</comment>
<comment type="subcellular location">
    <subcellularLocation>
        <location evidence="6">Vacuole</location>
    </subcellularLocation>
    <subcellularLocation>
        <location evidence="1">Secreted</location>
        <location evidence="1">Extracellular space</location>
    </subcellularLocation>
    <subcellularLocation>
        <location evidence="1">Secreted</location>
        <location evidence="1">Cell wall</location>
    </subcellularLocation>
    <text>Extracellular or cell-wall bound.</text>
</comment>
<comment type="alternative products">
    <event type="alternative splicing"/>
    <isoform>
        <id>O65355-1</id>
        <name>1</name>
        <sequence type="displayed"/>
    </isoform>
    <text>A number of isoforms are produced. According to EST sequences.</text>
</comment>
<comment type="tissue specificity">
    <text evidence="4">Expressed in roots, in leaves, stems and siliques.</text>
</comment>
<comment type="disruption phenotype">
    <text evidence="4">No visible phenotype under normal growth conditions.</text>
</comment>
<comment type="similarity">
    <text evidence="5">Belongs to the peptidase C26 family.</text>
</comment>
<comment type="sequence caution" evidence="5">
    <conflict type="frameshift">
        <sequence resource="EMBL-CDS" id="AAC33745"/>
    </conflict>
</comment>
<comment type="sequence caution" evidence="5">
    <conflict type="erroneous initiation">
        <sequence resource="EMBL-CDS" id="AAC83041"/>
    </conflict>
    <text>Truncated N-terminus.</text>
</comment>
<proteinExistence type="evidence at protein level"/>
<gene>
    <name type="primary">GGH2</name>
    <name type="synonym">GGH</name>
    <name type="synonym">GGH1</name>
    <name type="ordered locus">At1g78680</name>
    <name type="ORF">F9K20.28</name>
</gene>
<dbReference type="EC" id="3.4.19.9"/>
<dbReference type="EMBL" id="AC005679">
    <property type="protein sequence ID" value="AAC83041.1"/>
    <property type="status" value="ALT_INIT"/>
    <property type="molecule type" value="Genomic_DNA"/>
</dbReference>
<dbReference type="EMBL" id="CP002684">
    <property type="protein sequence ID" value="AEE36137.1"/>
    <property type="molecule type" value="Genomic_DNA"/>
</dbReference>
<dbReference type="EMBL" id="AY096428">
    <property type="protein sequence ID" value="AAM20068.1"/>
    <property type="molecule type" value="mRNA"/>
</dbReference>
<dbReference type="EMBL" id="AY070047">
    <property type="protein sequence ID" value="AAL49804.1"/>
    <property type="molecule type" value="mRNA"/>
</dbReference>
<dbReference type="EMBL" id="AF067141">
    <property type="protein sequence ID" value="AAC33745.1"/>
    <property type="status" value="ALT_FRAME"/>
    <property type="molecule type" value="mRNA"/>
</dbReference>
<dbReference type="PIR" id="F96815">
    <property type="entry name" value="F96815"/>
</dbReference>
<dbReference type="PIR" id="T52030">
    <property type="entry name" value="T52030"/>
</dbReference>
<dbReference type="RefSeq" id="NP_565186.2">
    <molecule id="O65355-1"/>
    <property type="nucleotide sequence ID" value="NM_106515.4"/>
</dbReference>
<dbReference type="SMR" id="O65355"/>
<dbReference type="BioGRID" id="29423">
    <property type="interactions" value="1"/>
</dbReference>
<dbReference type="FunCoup" id="O65355">
    <property type="interactions" value="1054"/>
</dbReference>
<dbReference type="IntAct" id="O65355">
    <property type="interactions" value="1"/>
</dbReference>
<dbReference type="STRING" id="3702.O65355"/>
<dbReference type="MEROPS" id="C26.003"/>
<dbReference type="PaxDb" id="3702-AT1G78680.1"/>
<dbReference type="ProteomicsDB" id="221836">
    <molecule id="O65355-1"/>
</dbReference>
<dbReference type="EnsemblPlants" id="AT1G78680.1">
    <molecule id="O65355-1"/>
    <property type="protein sequence ID" value="AT1G78680.1"/>
    <property type="gene ID" value="AT1G78680"/>
</dbReference>
<dbReference type="GeneID" id="844204"/>
<dbReference type="Gramene" id="AT1G78680.1">
    <molecule id="O65355-1"/>
    <property type="protein sequence ID" value="AT1G78680.1"/>
    <property type="gene ID" value="AT1G78680"/>
</dbReference>
<dbReference type="KEGG" id="ath:AT1G78680"/>
<dbReference type="Araport" id="AT1G78680"/>
<dbReference type="TAIR" id="AT1G78680">
    <property type="gene designation" value="GGH2"/>
</dbReference>
<dbReference type="eggNOG" id="KOG1559">
    <property type="taxonomic scope" value="Eukaryota"/>
</dbReference>
<dbReference type="HOGENOM" id="CLU_058704_0_0_1"/>
<dbReference type="InParanoid" id="O65355"/>
<dbReference type="PhylomeDB" id="O65355"/>
<dbReference type="BRENDA" id="3.4.19.9">
    <property type="organism ID" value="399"/>
</dbReference>
<dbReference type="PRO" id="PR:O65355"/>
<dbReference type="Proteomes" id="UP000006548">
    <property type="component" value="Chromosome 1"/>
</dbReference>
<dbReference type="ExpressionAtlas" id="O65355">
    <property type="expression patterns" value="baseline and differential"/>
</dbReference>
<dbReference type="GO" id="GO:0005615">
    <property type="term" value="C:extracellular space"/>
    <property type="evidence" value="ECO:0000250"/>
    <property type="project" value="UniProtKB"/>
</dbReference>
<dbReference type="GO" id="GO:0009505">
    <property type="term" value="C:plant-type cell wall"/>
    <property type="evidence" value="ECO:0000250"/>
    <property type="project" value="UniProtKB"/>
</dbReference>
<dbReference type="GO" id="GO:0000325">
    <property type="term" value="C:plant-type vacuole"/>
    <property type="evidence" value="ECO:0007005"/>
    <property type="project" value="TAIR"/>
</dbReference>
<dbReference type="GO" id="GO:0005773">
    <property type="term" value="C:vacuole"/>
    <property type="evidence" value="ECO:0000314"/>
    <property type="project" value="TAIR"/>
</dbReference>
<dbReference type="GO" id="GO:0034722">
    <property type="term" value="F:gamma-glutamyl-peptidase activity"/>
    <property type="evidence" value="ECO:0007669"/>
    <property type="project" value="UniProtKB-EC"/>
</dbReference>
<dbReference type="GO" id="GO:0008242">
    <property type="term" value="F:omega peptidase activity"/>
    <property type="evidence" value="ECO:0000314"/>
    <property type="project" value="TAIR"/>
</dbReference>
<dbReference type="GO" id="GO:0046900">
    <property type="term" value="P:tetrahydrofolylpolyglutamate metabolic process"/>
    <property type="evidence" value="ECO:0000314"/>
    <property type="project" value="TAIR"/>
</dbReference>
<dbReference type="CDD" id="cd01747">
    <property type="entry name" value="GATase1_Glutamyl_Hydrolase"/>
    <property type="match status" value="1"/>
</dbReference>
<dbReference type="FunFam" id="3.40.50.880:FF:000024">
    <property type="entry name" value="Folate gamma-glutamyl hydrolase"/>
    <property type="match status" value="1"/>
</dbReference>
<dbReference type="Gene3D" id="3.40.50.880">
    <property type="match status" value="1"/>
</dbReference>
<dbReference type="InterPro" id="IPR029062">
    <property type="entry name" value="Class_I_gatase-like"/>
</dbReference>
<dbReference type="InterPro" id="IPR015527">
    <property type="entry name" value="Pept_C26_g-glut_hydrolase"/>
</dbReference>
<dbReference type="InterPro" id="IPR011697">
    <property type="entry name" value="Peptidase_C26"/>
</dbReference>
<dbReference type="PANTHER" id="PTHR11315:SF0">
    <property type="entry name" value="FOLATE GAMMA-GLUTAMYL HYDROLASE"/>
    <property type="match status" value="1"/>
</dbReference>
<dbReference type="PANTHER" id="PTHR11315">
    <property type="entry name" value="PROTEASE FAMILY C26 GAMMA-GLUTAMYL HYDROLASE"/>
    <property type="match status" value="1"/>
</dbReference>
<dbReference type="Pfam" id="PF07722">
    <property type="entry name" value="Peptidase_C26"/>
    <property type="match status" value="1"/>
</dbReference>
<dbReference type="SUPFAM" id="SSF52317">
    <property type="entry name" value="Class I glutamine amidotransferase-like"/>
    <property type="match status" value="1"/>
</dbReference>
<dbReference type="PROSITE" id="PS51275">
    <property type="entry name" value="PEPTIDASE_C26_GGH"/>
    <property type="match status" value="1"/>
</dbReference>
<evidence type="ECO:0000250" key="1"/>
<evidence type="ECO:0000255" key="2"/>
<evidence type="ECO:0000255" key="3">
    <source>
        <dbReference type="PROSITE-ProRule" id="PRU00607"/>
    </source>
</evidence>
<evidence type="ECO:0000269" key="4">
    <source>
    </source>
</evidence>
<evidence type="ECO:0000305" key="5"/>
<evidence type="ECO:0000305" key="6">
    <source>
    </source>
</evidence>
<feature type="signal peptide" evidence="2">
    <location>
        <begin position="1"/>
        <end position="22"/>
    </location>
</feature>
<feature type="chain" id="PRO_0000026542" description="Gamma-glutamyl hydrolase 2">
    <location>
        <begin position="23"/>
        <end position="347"/>
    </location>
</feature>
<feature type="domain" description="Gamma-glutamyl hydrolase" evidence="3">
    <location>
        <begin position="45"/>
        <end position="341"/>
    </location>
</feature>
<feature type="active site" description="Nucleophile" evidence="3">
    <location>
        <position position="155"/>
    </location>
</feature>
<feature type="active site" description="Proton donor" evidence="3">
    <location>
        <position position="268"/>
    </location>
</feature>
<feature type="sequence conflict" description="In Ref. 4; AAC33745." evidence="5" ref="4">
    <original>G</original>
    <variation>A</variation>
    <location>
        <position position="34"/>
    </location>
</feature>
<feature type="sequence conflict" description="In Ref. 4; AAC33745." evidence="5" ref="4">
    <original>D</original>
    <variation>N</variation>
    <location>
        <position position="64"/>
    </location>
</feature>
<feature type="sequence conflict" description="In Ref. 4; AAC33745." evidence="5" ref="4">
    <original>T</original>
    <variation>I</variation>
    <location>
        <position position="74"/>
    </location>
</feature>
<feature type="sequence conflict" description="In Ref. 4; AAC33745." evidence="5" ref="4">
    <original>S</original>
    <variation>P</variation>
    <location>
        <position position="77"/>
    </location>
</feature>
<feature type="sequence conflict" description="In Ref. 4; AAC33745." evidence="5" ref="4">
    <original>E</original>
    <variation>G</variation>
    <location>
        <position position="103"/>
    </location>
</feature>
<feature type="sequence conflict" description="In Ref. 4; AAC33745." evidence="5" ref="4">
    <original>F</original>
    <variation>L</variation>
    <location>
        <position position="136"/>
    </location>
</feature>